<reference key="1">
    <citation type="journal article" date="2008" name="PLoS ONE">
        <title>Genome sequence of the saprophyte Leptospira biflexa provides insights into the evolution of Leptospira and the pathogenesis of leptospirosis.</title>
        <authorList>
            <person name="Picardeau M."/>
            <person name="Bulach D.M."/>
            <person name="Bouchier C."/>
            <person name="Zuerner R.L."/>
            <person name="Zidane N."/>
            <person name="Wilson P.J."/>
            <person name="Creno S."/>
            <person name="Kuczek E.S."/>
            <person name="Bommezzadri S."/>
            <person name="Davis J.C."/>
            <person name="McGrath A."/>
            <person name="Johnson M.J."/>
            <person name="Boursaux-Eude C."/>
            <person name="Seemann T."/>
            <person name="Rouy Z."/>
            <person name="Coppel R.L."/>
            <person name="Rood J.I."/>
            <person name="Lajus A."/>
            <person name="Davies J.K."/>
            <person name="Medigue C."/>
            <person name="Adler B."/>
        </authorList>
    </citation>
    <scope>NUCLEOTIDE SEQUENCE [LARGE SCALE GENOMIC DNA]</scope>
    <source>
        <strain>Patoc 1 / Ames</strain>
    </source>
</reference>
<proteinExistence type="inferred from homology"/>
<dbReference type="EC" id="6.2.1.5" evidence="1"/>
<dbReference type="EMBL" id="CP000777">
    <property type="protein sequence ID" value="ABZ94503.1"/>
    <property type="molecule type" value="Genomic_DNA"/>
</dbReference>
<dbReference type="RefSeq" id="WP_012476307.1">
    <property type="nucleotide sequence ID" value="NC_010842.1"/>
</dbReference>
<dbReference type="SMR" id="B0SAP0"/>
<dbReference type="KEGG" id="lbf:LBF_2003"/>
<dbReference type="HOGENOM" id="CLU_037430_0_2_12"/>
<dbReference type="UniPathway" id="UPA00223">
    <property type="reaction ID" value="UER00999"/>
</dbReference>
<dbReference type="GO" id="GO:0005829">
    <property type="term" value="C:cytosol"/>
    <property type="evidence" value="ECO:0007669"/>
    <property type="project" value="TreeGrafter"/>
</dbReference>
<dbReference type="GO" id="GO:0042709">
    <property type="term" value="C:succinate-CoA ligase complex"/>
    <property type="evidence" value="ECO:0007669"/>
    <property type="project" value="TreeGrafter"/>
</dbReference>
<dbReference type="GO" id="GO:0005524">
    <property type="term" value="F:ATP binding"/>
    <property type="evidence" value="ECO:0007669"/>
    <property type="project" value="UniProtKB-UniRule"/>
</dbReference>
<dbReference type="GO" id="GO:0000287">
    <property type="term" value="F:magnesium ion binding"/>
    <property type="evidence" value="ECO:0007669"/>
    <property type="project" value="UniProtKB-UniRule"/>
</dbReference>
<dbReference type="GO" id="GO:0004775">
    <property type="term" value="F:succinate-CoA ligase (ADP-forming) activity"/>
    <property type="evidence" value="ECO:0007669"/>
    <property type="project" value="UniProtKB-UniRule"/>
</dbReference>
<dbReference type="GO" id="GO:0004776">
    <property type="term" value="F:succinate-CoA ligase (GDP-forming) activity"/>
    <property type="evidence" value="ECO:0007669"/>
    <property type="project" value="RHEA"/>
</dbReference>
<dbReference type="GO" id="GO:0006104">
    <property type="term" value="P:succinyl-CoA metabolic process"/>
    <property type="evidence" value="ECO:0007669"/>
    <property type="project" value="TreeGrafter"/>
</dbReference>
<dbReference type="GO" id="GO:0006099">
    <property type="term" value="P:tricarboxylic acid cycle"/>
    <property type="evidence" value="ECO:0007669"/>
    <property type="project" value="UniProtKB-UniRule"/>
</dbReference>
<dbReference type="FunFam" id="3.30.1490.20:FF:000002">
    <property type="entry name" value="Succinate--CoA ligase [ADP-forming] subunit beta"/>
    <property type="match status" value="1"/>
</dbReference>
<dbReference type="FunFam" id="3.30.470.20:FF:000002">
    <property type="entry name" value="Succinate--CoA ligase [ADP-forming] subunit beta"/>
    <property type="match status" value="1"/>
</dbReference>
<dbReference type="FunFam" id="3.40.50.261:FF:000001">
    <property type="entry name" value="Succinate--CoA ligase [ADP-forming] subunit beta"/>
    <property type="match status" value="1"/>
</dbReference>
<dbReference type="Gene3D" id="3.30.1490.20">
    <property type="entry name" value="ATP-grasp fold, A domain"/>
    <property type="match status" value="1"/>
</dbReference>
<dbReference type="Gene3D" id="3.30.470.20">
    <property type="entry name" value="ATP-grasp fold, B domain"/>
    <property type="match status" value="1"/>
</dbReference>
<dbReference type="Gene3D" id="3.40.50.261">
    <property type="entry name" value="Succinyl-CoA synthetase domains"/>
    <property type="match status" value="1"/>
</dbReference>
<dbReference type="HAMAP" id="MF_00558">
    <property type="entry name" value="Succ_CoA_beta"/>
    <property type="match status" value="1"/>
</dbReference>
<dbReference type="InterPro" id="IPR013650">
    <property type="entry name" value="ATP-grasp_succ-CoA_synth-type"/>
</dbReference>
<dbReference type="InterPro" id="IPR013815">
    <property type="entry name" value="ATP_grasp_subdomain_1"/>
</dbReference>
<dbReference type="InterPro" id="IPR017866">
    <property type="entry name" value="Succ-CoA_synthase_bsu_CS"/>
</dbReference>
<dbReference type="InterPro" id="IPR005811">
    <property type="entry name" value="SUCC_ACL_C"/>
</dbReference>
<dbReference type="InterPro" id="IPR005809">
    <property type="entry name" value="Succ_CoA_ligase-like_bsu"/>
</dbReference>
<dbReference type="InterPro" id="IPR016102">
    <property type="entry name" value="Succinyl-CoA_synth-like"/>
</dbReference>
<dbReference type="NCBIfam" id="NF001913">
    <property type="entry name" value="PRK00696.1"/>
    <property type="match status" value="1"/>
</dbReference>
<dbReference type="NCBIfam" id="TIGR01016">
    <property type="entry name" value="sucCoAbeta"/>
    <property type="match status" value="1"/>
</dbReference>
<dbReference type="PANTHER" id="PTHR11815:SF10">
    <property type="entry name" value="SUCCINATE--COA LIGASE [GDP-FORMING] SUBUNIT BETA, MITOCHONDRIAL"/>
    <property type="match status" value="1"/>
</dbReference>
<dbReference type="PANTHER" id="PTHR11815">
    <property type="entry name" value="SUCCINYL-COA SYNTHETASE BETA CHAIN"/>
    <property type="match status" value="1"/>
</dbReference>
<dbReference type="Pfam" id="PF08442">
    <property type="entry name" value="ATP-grasp_2"/>
    <property type="match status" value="1"/>
</dbReference>
<dbReference type="Pfam" id="PF00549">
    <property type="entry name" value="Ligase_CoA"/>
    <property type="match status" value="1"/>
</dbReference>
<dbReference type="PIRSF" id="PIRSF001554">
    <property type="entry name" value="SucCS_beta"/>
    <property type="match status" value="1"/>
</dbReference>
<dbReference type="SUPFAM" id="SSF56059">
    <property type="entry name" value="Glutathione synthetase ATP-binding domain-like"/>
    <property type="match status" value="1"/>
</dbReference>
<dbReference type="SUPFAM" id="SSF52210">
    <property type="entry name" value="Succinyl-CoA synthetase domains"/>
    <property type="match status" value="1"/>
</dbReference>
<dbReference type="PROSITE" id="PS01217">
    <property type="entry name" value="SUCCINYL_COA_LIG_3"/>
    <property type="match status" value="1"/>
</dbReference>
<comment type="function">
    <text evidence="1">Succinyl-CoA synthetase functions in the citric acid cycle (TCA), coupling the hydrolysis of succinyl-CoA to the synthesis of either ATP or GTP and thus represents the only step of substrate-level phosphorylation in the TCA. The beta subunit provides nucleotide specificity of the enzyme and binds the substrate succinate, while the binding sites for coenzyme A and phosphate are found in the alpha subunit.</text>
</comment>
<comment type="catalytic activity">
    <reaction evidence="1">
        <text>succinate + ATP + CoA = succinyl-CoA + ADP + phosphate</text>
        <dbReference type="Rhea" id="RHEA:17661"/>
        <dbReference type="ChEBI" id="CHEBI:30031"/>
        <dbReference type="ChEBI" id="CHEBI:30616"/>
        <dbReference type="ChEBI" id="CHEBI:43474"/>
        <dbReference type="ChEBI" id="CHEBI:57287"/>
        <dbReference type="ChEBI" id="CHEBI:57292"/>
        <dbReference type="ChEBI" id="CHEBI:456216"/>
        <dbReference type="EC" id="6.2.1.5"/>
    </reaction>
    <physiologicalReaction direction="right-to-left" evidence="1">
        <dbReference type="Rhea" id="RHEA:17663"/>
    </physiologicalReaction>
</comment>
<comment type="catalytic activity">
    <reaction evidence="1">
        <text>GTP + succinate + CoA = succinyl-CoA + GDP + phosphate</text>
        <dbReference type="Rhea" id="RHEA:22120"/>
        <dbReference type="ChEBI" id="CHEBI:30031"/>
        <dbReference type="ChEBI" id="CHEBI:37565"/>
        <dbReference type="ChEBI" id="CHEBI:43474"/>
        <dbReference type="ChEBI" id="CHEBI:57287"/>
        <dbReference type="ChEBI" id="CHEBI:57292"/>
        <dbReference type="ChEBI" id="CHEBI:58189"/>
    </reaction>
    <physiologicalReaction direction="right-to-left" evidence="1">
        <dbReference type="Rhea" id="RHEA:22122"/>
    </physiologicalReaction>
</comment>
<comment type="cofactor">
    <cofactor evidence="1">
        <name>Mg(2+)</name>
        <dbReference type="ChEBI" id="CHEBI:18420"/>
    </cofactor>
    <text evidence="1">Binds 1 Mg(2+) ion per subunit.</text>
</comment>
<comment type="pathway">
    <text evidence="1">Carbohydrate metabolism; tricarboxylic acid cycle; succinate from succinyl-CoA (ligase route): step 1/1.</text>
</comment>
<comment type="subunit">
    <text evidence="1">Heterotetramer of two alpha and two beta subunits.</text>
</comment>
<comment type="similarity">
    <text evidence="1">Belongs to the succinate/malate CoA ligase beta subunit family.</text>
</comment>
<evidence type="ECO:0000255" key="1">
    <source>
        <dbReference type="HAMAP-Rule" id="MF_00558"/>
    </source>
</evidence>
<sequence>MKVHEYQAKEILRRHNANVPFGKVIDAVGDFEKAYNEVVQKSPVVVVKAQIHAGGRGKGGGVKVAKTKDDAKAAAEKILGMQLITPQTGPEGKKVLKVYLEQGLEIAKEYYLSILLDRAIRKTIIMASTEGGMEIEEVAETHPEKIIKIQIDPGIGIQGSQVRELAFALGIPTEAQKSFTALVNSVYNAYIKEDAALLEINPLILTKQNEIIAGDCKMDLDENALYRHPDNEALRDITEEDPYEVKAKEYNLNYVKLDGNIGCMVNGAGLAMATMDIVKLAGAEPANFLDVGGGANPTTVENGFRLILSDPNVKGIFVNVFGGIVRCDRVAVGIIEATKKVNVSVPVVVRLKGTNAEEGKKILNESGMNIVGVEGLRDAADKIVSLIKK</sequence>
<organism>
    <name type="scientific">Leptospira biflexa serovar Patoc (strain Patoc 1 / Ames)</name>
    <dbReference type="NCBI Taxonomy" id="355278"/>
    <lineage>
        <taxon>Bacteria</taxon>
        <taxon>Pseudomonadati</taxon>
        <taxon>Spirochaetota</taxon>
        <taxon>Spirochaetia</taxon>
        <taxon>Leptospirales</taxon>
        <taxon>Leptospiraceae</taxon>
        <taxon>Leptospira</taxon>
    </lineage>
</organism>
<gene>
    <name evidence="1" type="primary">sucC</name>
    <name type="ordered locus">LBF_2003</name>
</gene>
<feature type="chain" id="PRO_1000129199" description="Succinate--CoA ligase [ADP-forming] subunit beta">
    <location>
        <begin position="1"/>
        <end position="389"/>
    </location>
</feature>
<feature type="domain" description="ATP-grasp" evidence="1">
    <location>
        <begin position="9"/>
        <end position="246"/>
    </location>
</feature>
<feature type="binding site" evidence="1">
    <location>
        <position position="48"/>
    </location>
    <ligand>
        <name>ATP</name>
        <dbReference type="ChEBI" id="CHEBI:30616"/>
    </ligand>
</feature>
<feature type="binding site" evidence="1">
    <location>
        <begin position="55"/>
        <end position="57"/>
    </location>
    <ligand>
        <name>ATP</name>
        <dbReference type="ChEBI" id="CHEBI:30616"/>
    </ligand>
</feature>
<feature type="binding site" evidence="1">
    <location>
        <position position="101"/>
    </location>
    <ligand>
        <name>ATP</name>
        <dbReference type="ChEBI" id="CHEBI:30616"/>
    </ligand>
</feature>
<feature type="binding site" evidence="1">
    <location>
        <position position="104"/>
    </location>
    <ligand>
        <name>ATP</name>
        <dbReference type="ChEBI" id="CHEBI:30616"/>
    </ligand>
</feature>
<feature type="binding site" evidence="1">
    <location>
        <position position="109"/>
    </location>
    <ligand>
        <name>ATP</name>
        <dbReference type="ChEBI" id="CHEBI:30616"/>
    </ligand>
</feature>
<feature type="binding site" evidence="1">
    <location>
        <position position="201"/>
    </location>
    <ligand>
        <name>Mg(2+)</name>
        <dbReference type="ChEBI" id="CHEBI:18420"/>
    </ligand>
</feature>
<feature type="binding site" evidence="1">
    <location>
        <position position="215"/>
    </location>
    <ligand>
        <name>Mg(2+)</name>
        <dbReference type="ChEBI" id="CHEBI:18420"/>
    </ligand>
</feature>
<feature type="binding site" evidence="1">
    <location>
        <position position="266"/>
    </location>
    <ligand>
        <name>substrate</name>
        <note>ligand shared with subunit alpha</note>
    </ligand>
</feature>
<feature type="binding site" evidence="1">
    <location>
        <begin position="323"/>
        <end position="325"/>
    </location>
    <ligand>
        <name>substrate</name>
        <note>ligand shared with subunit alpha</note>
    </ligand>
</feature>
<name>SUCC_LEPBA</name>
<keyword id="KW-0067">ATP-binding</keyword>
<keyword id="KW-0436">Ligase</keyword>
<keyword id="KW-0460">Magnesium</keyword>
<keyword id="KW-0479">Metal-binding</keyword>
<keyword id="KW-0547">Nucleotide-binding</keyword>
<keyword id="KW-0816">Tricarboxylic acid cycle</keyword>
<protein>
    <recommendedName>
        <fullName evidence="1">Succinate--CoA ligase [ADP-forming] subunit beta</fullName>
        <ecNumber evidence="1">6.2.1.5</ecNumber>
    </recommendedName>
    <alternativeName>
        <fullName evidence="1">Succinyl-CoA synthetase subunit beta</fullName>
        <shortName evidence="1">SCS-beta</shortName>
    </alternativeName>
</protein>
<accession>B0SAP0</accession>